<organism>
    <name type="scientific">Beutenbergia cavernae (strain ATCC BAA-8 / DSM 12333 / CCUG 43141 / JCM 11478 / NBRC 16432 / NCIMB 13614 / HKI 0122)</name>
    <dbReference type="NCBI Taxonomy" id="471853"/>
    <lineage>
        <taxon>Bacteria</taxon>
        <taxon>Bacillati</taxon>
        <taxon>Actinomycetota</taxon>
        <taxon>Actinomycetes</taxon>
        <taxon>Micrococcales</taxon>
        <taxon>Beutenbergiaceae</taxon>
        <taxon>Beutenbergia</taxon>
    </lineage>
</organism>
<dbReference type="EMBL" id="CP001618">
    <property type="protein sequence ID" value="ACQ80004.1"/>
    <property type="molecule type" value="Genomic_DNA"/>
</dbReference>
<dbReference type="RefSeq" id="WP_015882244.1">
    <property type="nucleotide sequence ID" value="NC_012669.1"/>
</dbReference>
<dbReference type="SMR" id="C5C491"/>
<dbReference type="STRING" id="471853.Bcav_1748"/>
<dbReference type="KEGG" id="bcv:Bcav_1748"/>
<dbReference type="eggNOG" id="COG1420">
    <property type="taxonomic scope" value="Bacteria"/>
</dbReference>
<dbReference type="HOGENOM" id="CLU_050019_2_0_11"/>
<dbReference type="OrthoDB" id="9783139at2"/>
<dbReference type="Proteomes" id="UP000007962">
    <property type="component" value="Chromosome"/>
</dbReference>
<dbReference type="GO" id="GO:0003677">
    <property type="term" value="F:DNA binding"/>
    <property type="evidence" value="ECO:0007669"/>
    <property type="project" value="InterPro"/>
</dbReference>
<dbReference type="GO" id="GO:0003700">
    <property type="term" value="F:DNA-binding transcription factor activity"/>
    <property type="evidence" value="ECO:0007669"/>
    <property type="project" value="InterPro"/>
</dbReference>
<dbReference type="GO" id="GO:0045892">
    <property type="term" value="P:negative regulation of DNA-templated transcription"/>
    <property type="evidence" value="ECO:0007669"/>
    <property type="project" value="UniProtKB-UniRule"/>
</dbReference>
<dbReference type="FunFam" id="1.10.10.10:FF:000049">
    <property type="entry name" value="Heat-inducible transcription repressor HrcA"/>
    <property type="match status" value="1"/>
</dbReference>
<dbReference type="Gene3D" id="3.30.450.40">
    <property type="match status" value="1"/>
</dbReference>
<dbReference type="Gene3D" id="3.30.390.60">
    <property type="entry name" value="Heat-inducible transcription repressor hrca homolog, domain 3"/>
    <property type="match status" value="1"/>
</dbReference>
<dbReference type="Gene3D" id="1.10.10.10">
    <property type="entry name" value="Winged helix-like DNA-binding domain superfamily/Winged helix DNA-binding domain"/>
    <property type="match status" value="1"/>
</dbReference>
<dbReference type="HAMAP" id="MF_00081">
    <property type="entry name" value="HrcA"/>
    <property type="match status" value="1"/>
</dbReference>
<dbReference type="InterPro" id="IPR001034">
    <property type="entry name" value="DeoR_HTH"/>
</dbReference>
<dbReference type="InterPro" id="IPR029016">
    <property type="entry name" value="GAF-like_dom_sf"/>
</dbReference>
<dbReference type="InterPro" id="IPR002571">
    <property type="entry name" value="HrcA"/>
</dbReference>
<dbReference type="InterPro" id="IPR021153">
    <property type="entry name" value="HrcA_C"/>
</dbReference>
<dbReference type="InterPro" id="IPR036388">
    <property type="entry name" value="WH-like_DNA-bd_sf"/>
</dbReference>
<dbReference type="InterPro" id="IPR036390">
    <property type="entry name" value="WH_DNA-bd_sf"/>
</dbReference>
<dbReference type="InterPro" id="IPR023120">
    <property type="entry name" value="WHTH_transcript_rep_HrcA_IDD"/>
</dbReference>
<dbReference type="NCBIfam" id="TIGR00331">
    <property type="entry name" value="hrcA"/>
    <property type="match status" value="1"/>
</dbReference>
<dbReference type="PANTHER" id="PTHR34824">
    <property type="entry name" value="HEAT-INDUCIBLE TRANSCRIPTION REPRESSOR HRCA"/>
    <property type="match status" value="1"/>
</dbReference>
<dbReference type="PANTHER" id="PTHR34824:SF1">
    <property type="entry name" value="HEAT-INDUCIBLE TRANSCRIPTION REPRESSOR HRCA"/>
    <property type="match status" value="1"/>
</dbReference>
<dbReference type="Pfam" id="PF01628">
    <property type="entry name" value="HrcA"/>
    <property type="match status" value="1"/>
</dbReference>
<dbReference type="Pfam" id="PF08220">
    <property type="entry name" value="HTH_DeoR"/>
    <property type="match status" value="1"/>
</dbReference>
<dbReference type="PIRSF" id="PIRSF005485">
    <property type="entry name" value="HrcA"/>
    <property type="match status" value="1"/>
</dbReference>
<dbReference type="SUPFAM" id="SSF55781">
    <property type="entry name" value="GAF domain-like"/>
    <property type="match status" value="1"/>
</dbReference>
<dbReference type="SUPFAM" id="SSF46785">
    <property type="entry name" value="Winged helix' DNA-binding domain"/>
    <property type="match status" value="1"/>
</dbReference>
<reference key="1">
    <citation type="journal article" date="2009" name="Stand. Genomic Sci.">
        <title>Complete genome sequence of Beutenbergia cavernae type strain (HKI 0122).</title>
        <authorList>
            <person name="Land M."/>
            <person name="Pukall R."/>
            <person name="Abt B."/>
            <person name="Goker M."/>
            <person name="Rohde M."/>
            <person name="Glavina Del Rio T."/>
            <person name="Tice H."/>
            <person name="Copeland A."/>
            <person name="Cheng J.F."/>
            <person name="Lucas S."/>
            <person name="Chen F."/>
            <person name="Nolan M."/>
            <person name="Bruce D."/>
            <person name="Goodwin L."/>
            <person name="Pitluck S."/>
            <person name="Ivanova N."/>
            <person name="Mavromatis K."/>
            <person name="Ovchinnikova G."/>
            <person name="Pati A."/>
            <person name="Chen A."/>
            <person name="Palaniappan K."/>
            <person name="Hauser L."/>
            <person name="Chang Y.J."/>
            <person name="Jefferies C.C."/>
            <person name="Saunders E."/>
            <person name="Brettin T."/>
            <person name="Detter J.C."/>
            <person name="Han C."/>
            <person name="Chain P."/>
            <person name="Bristow J."/>
            <person name="Eisen J.A."/>
            <person name="Markowitz V."/>
            <person name="Hugenholtz P."/>
            <person name="Kyrpides N.C."/>
            <person name="Klenk H.P."/>
            <person name="Lapidus A."/>
        </authorList>
    </citation>
    <scope>NUCLEOTIDE SEQUENCE [LARGE SCALE GENOMIC DNA]</scope>
    <source>
        <strain>ATCC BAA-8 / DSM 12333 / CCUG 43141 / JCM 11478 / NBRC 16432 / NCIMB 13614 / HKI 0122</strain>
    </source>
</reference>
<sequence>MSDERRLEVLRAIVRDYVSTREPVGSRALVERHALGVSPATIRNDMAALEESGYIAQPHTSAGRVPTDKGYRLFVDRLSTLKPLTPAERRAIEHLLDEAVDLDDVVDRTVRLLAQITHQVAVVQYPSLRRTTLRHIELVPMAPGRLLVVMIMDTGRVEQRTIELAADAAPDEAVVAELRARLNAVGAGRRMPRLGVELEMLPTYFAPADRPFVDAVNAVIAEALAEETEERIVMAGTANLARSDTDFPRTISPVLEALEEQVVLLRLLSEMALDAEEVRSERGDGISVRIGHENRHAGLAETSIVASGYGGVAADDAVAYLGVLGPTRMDYPTTMASVRAVARYLSRALGG</sequence>
<accession>C5C491</accession>
<comment type="function">
    <text evidence="1">Negative regulator of class I heat shock genes (grpE-dnaK-dnaJ and groELS operons). Prevents heat-shock induction of these operons.</text>
</comment>
<comment type="similarity">
    <text evidence="1">Belongs to the HrcA family.</text>
</comment>
<name>HRCA_BEUC1</name>
<proteinExistence type="inferred from homology"/>
<protein>
    <recommendedName>
        <fullName evidence="1">Heat-inducible transcription repressor HrcA</fullName>
    </recommendedName>
</protein>
<feature type="chain" id="PRO_1000202549" description="Heat-inducible transcription repressor HrcA">
    <location>
        <begin position="1"/>
        <end position="351"/>
    </location>
</feature>
<evidence type="ECO:0000255" key="1">
    <source>
        <dbReference type="HAMAP-Rule" id="MF_00081"/>
    </source>
</evidence>
<gene>
    <name evidence="1" type="primary">hrcA</name>
    <name type="ordered locus">Bcav_1748</name>
</gene>
<keyword id="KW-1185">Reference proteome</keyword>
<keyword id="KW-0678">Repressor</keyword>
<keyword id="KW-0346">Stress response</keyword>
<keyword id="KW-0804">Transcription</keyword>
<keyword id="KW-0805">Transcription regulation</keyword>